<comment type="function">
    <text evidence="1">Single strand-specific metallo-endoribonuclease involved in late-stage 70S ribosome quality control and in maturation of the 3' terminus of the 16S rRNA.</text>
</comment>
<comment type="cofactor">
    <cofactor evidence="1">
        <name>Zn(2+)</name>
        <dbReference type="ChEBI" id="CHEBI:29105"/>
    </cofactor>
    <text evidence="1">Binds 1 zinc ion.</text>
</comment>
<comment type="subcellular location">
    <subcellularLocation>
        <location evidence="1">Cytoplasm</location>
    </subcellularLocation>
</comment>
<comment type="similarity">
    <text evidence="1">Belongs to the endoribonuclease YbeY family.</text>
</comment>
<protein>
    <recommendedName>
        <fullName evidence="1">Endoribonuclease YbeY</fullName>
        <ecNumber evidence="1">3.1.-.-</ecNumber>
    </recommendedName>
</protein>
<gene>
    <name evidence="1" type="primary">ybeY</name>
    <name type="synonym">ykjF</name>
    <name type="ordered locus">LL1086</name>
    <name type="ORF">L94534</name>
</gene>
<reference key="1">
    <citation type="journal article" date="2001" name="Genome Res.">
        <title>The complete genome sequence of the lactic acid bacterium Lactococcus lactis ssp. lactis IL1403.</title>
        <authorList>
            <person name="Bolotin A."/>
            <person name="Wincker P."/>
            <person name="Mauger S."/>
            <person name="Jaillon O."/>
            <person name="Malarme K."/>
            <person name="Weissenbach J."/>
            <person name="Ehrlich S.D."/>
            <person name="Sorokin A."/>
        </authorList>
    </citation>
    <scope>NUCLEOTIDE SEQUENCE [LARGE SCALE GENOMIC DNA]</scope>
    <source>
        <strain>IL1403</strain>
    </source>
</reference>
<feature type="chain" id="PRO_0000102471" description="Endoribonuclease YbeY">
    <location>
        <begin position="1"/>
        <end position="162"/>
    </location>
</feature>
<feature type="binding site" evidence="1">
    <location>
        <position position="128"/>
    </location>
    <ligand>
        <name>Zn(2+)</name>
        <dbReference type="ChEBI" id="CHEBI:29105"/>
        <note>catalytic</note>
    </ligand>
</feature>
<feature type="binding site" evidence="1">
    <location>
        <position position="132"/>
    </location>
    <ligand>
        <name>Zn(2+)</name>
        <dbReference type="ChEBI" id="CHEBI:29105"/>
        <note>catalytic</note>
    </ligand>
</feature>
<feature type="binding site" evidence="1">
    <location>
        <position position="138"/>
    </location>
    <ligand>
        <name>Zn(2+)</name>
        <dbReference type="ChEBI" id="CHEBI:29105"/>
        <note>catalytic</note>
    </ligand>
</feature>
<organism>
    <name type="scientific">Lactococcus lactis subsp. lactis (strain IL1403)</name>
    <name type="common">Streptococcus lactis</name>
    <dbReference type="NCBI Taxonomy" id="272623"/>
    <lineage>
        <taxon>Bacteria</taxon>
        <taxon>Bacillati</taxon>
        <taxon>Bacillota</taxon>
        <taxon>Bacilli</taxon>
        <taxon>Lactobacillales</taxon>
        <taxon>Streptococcaceae</taxon>
        <taxon>Lactococcus</taxon>
    </lineage>
</organism>
<evidence type="ECO:0000255" key="1">
    <source>
        <dbReference type="HAMAP-Rule" id="MF_00009"/>
    </source>
</evidence>
<sequence>MYVELVDETGQVPSEIIEQTKEVLAFAAKKLNLKESTEMSVTFVDNARSHELNLQYRETDRPTDVISLEYKPDESEFFFDEDMELPEELLEEMDPFIGELFISIDKAAEQAADYGHSIEREYGWLAVHGFLHINGYDHYTPEEESEMFGLQEEILTAYGLTR</sequence>
<name>YBEY_LACLA</name>
<dbReference type="EC" id="3.1.-.-" evidence="1"/>
<dbReference type="EMBL" id="AE005176">
    <property type="protein sequence ID" value="AAK05184.1"/>
    <property type="molecule type" value="Genomic_DNA"/>
</dbReference>
<dbReference type="PIR" id="F86760">
    <property type="entry name" value="F86760"/>
</dbReference>
<dbReference type="RefSeq" id="NP_267242.1">
    <property type="nucleotide sequence ID" value="NC_002662.1"/>
</dbReference>
<dbReference type="RefSeq" id="WP_003130652.1">
    <property type="nucleotide sequence ID" value="NC_002662.1"/>
</dbReference>
<dbReference type="SMR" id="Q9CGL0"/>
<dbReference type="PaxDb" id="272623-L94534"/>
<dbReference type="EnsemblBacteria" id="AAK05184">
    <property type="protein sequence ID" value="AAK05184"/>
    <property type="gene ID" value="L94534"/>
</dbReference>
<dbReference type="KEGG" id="lla:L94534"/>
<dbReference type="PATRIC" id="fig|272623.7.peg.1164"/>
<dbReference type="eggNOG" id="COG0319">
    <property type="taxonomic scope" value="Bacteria"/>
</dbReference>
<dbReference type="HOGENOM" id="CLU_106710_3_0_9"/>
<dbReference type="OrthoDB" id="9807740at2"/>
<dbReference type="Proteomes" id="UP000002196">
    <property type="component" value="Chromosome"/>
</dbReference>
<dbReference type="GO" id="GO:0005737">
    <property type="term" value="C:cytoplasm"/>
    <property type="evidence" value="ECO:0007669"/>
    <property type="project" value="UniProtKB-SubCell"/>
</dbReference>
<dbReference type="GO" id="GO:0004222">
    <property type="term" value="F:metalloendopeptidase activity"/>
    <property type="evidence" value="ECO:0007669"/>
    <property type="project" value="InterPro"/>
</dbReference>
<dbReference type="GO" id="GO:0004521">
    <property type="term" value="F:RNA endonuclease activity"/>
    <property type="evidence" value="ECO:0007669"/>
    <property type="project" value="UniProtKB-UniRule"/>
</dbReference>
<dbReference type="GO" id="GO:0008270">
    <property type="term" value="F:zinc ion binding"/>
    <property type="evidence" value="ECO:0007669"/>
    <property type="project" value="UniProtKB-UniRule"/>
</dbReference>
<dbReference type="GO" id="GO:0006364">
    <property type="term" value="P:rRNA processing"/>
    <property type="evidence" value="ECO:0007669"/>
    <property type="project" value="UniProtKB-UniRule"/>
</dbReference>
<dbReference type="Gene3D" id="3.40.390.30">
    <property type="entry name" value="Metalloproteases ('zincins'), catalytic domain"/>
    <property type="match status" value="1"/>
</dbReference>
<dbReference type="HAMAP" id="MF_00009">
    <property type="entry name" value="Endoribonucl_YbeY"/>
    <property type="match status" value="1"/>
</dbReference>
<dbReference type="InterPro" id="IPR023091">
    <property type="entry name" value="MetalPrtase_cat_dom_sf_prd"/>
</dbReference>
<dbReference type="InterPro" id="IPR002036">
    <property type="entry name" value="YbeY"/>
</dbReference>
<dbReference type="InterPro" id="IPR020549">
    <property type="entry name" value="YbeY_CS"/>
</dbReference>
<dbReference type="NCBIfam" id="TIGR00043">
    <property type="entry name" value="rRNA maturation RNase YbeY"/>
    <property type="match status" value="1"/>
</dbReference>
<dbReference type="PANTHER" id="PTHR46986">
    <property type="entry name" value="ENDORIBONUCLEASE YBEY, CHLOROPLASTIC"/>
    <property type="match status" value="1"/>
</dbReference>
<dbReference type="PANTHER" id="PTHR46986:SF1">
    <property type="entry name" value="ENDORIBONUCLEASE YBEY, CHLOROPLASTIC"/>
    <property type="match status" value="1"/>
</dbReference>
<dbReference type="Pfam" id="PF02130">
    <property type="entry name" value="YbeY"/>
    <property type="match status" value="1"/>
</dbReference>
<dbReference type="SUPFAM" id="SSF55486">
    <property type="entry name" value="Metalloproteases ('zincins'), catalytic domain"/>
    <property type="match status" value="1"/>
</dbReference>
<dbReference type="PROSITE" id="PS01306">
    <property type="entry name" value="UPF0054"/>
    <property type="match status" value="1"/>
</dbReference>
<keyword id="KW-0963">Cytoplasm</keyword>
<keyword id="KW-0255">Endonuclease</keyword>
<keyword id="KW-0378">Hydrolase</keyword>
<keyword id="KW-0479">Metal-binding</keyword>
<keyword id="KW-0540">Nuclease</keyword>
<keyword id="KW-1185">Reference proteome</keyword>
<keyword id="KW-0690">Ribosome biogenesis</keyword>
<keyword id="KW-0698">rRNA processing</keyword>
<keyword id="KW-0862">Zinc</keyword>
<accession>Q9CGL0</accession>
<proteinExistence type="inferred from homology"/>